<comment type="function">
    <text evidence="1">DNA-dependent RNA polymerase catalyzes the transcription of DNA into RNA using the four ribonucleoside triphosphates as substrates. Common component of RNA polymerases I, II and III which synthesize ribosomal RNA precursors, mRNA precursors and many functional non-coding RNAs, and small RNAs, such as 5S rRNA and tRNAs, respectively (By similarity).</text>
</comment>
<comment type="subunit">
    <text evidence="1">Component of the RNA polymerase I (Pol I), RNA polymerase II (Pol II) and RNA polymerase III (Pol III) complexes consisting of at least 13, 12 and 17 subunits, respectively. Directly interacts with POLR2A (By similarity).</text>
</comment>
<comment type="interaction">
    <interactant intactId="EBI-320556">
        <id>Q19826</id>
    </interactant>
    <interactant intactId="EBI-320562">
        <id>Q20628</id>
        <label>cdd-2</label>
    </interactant>
    <organismsDiffer>false</organismsDiffer>
    <experiments>3</experiments>
</comment>
<comment type="subcellular location">
    <subcellularLocation>
        <location evidence="1">Nucleus</location>
    </subcellularLocation>
</comment>
<comment type="similarity">
    <text evidence="2">Belongs to the eukaryotic RPB8 RNA polymerase subunit family.</text>
</comment>
<proteinExistence type="evidence at protein level"/>
<evidence type="ECO:0000250" key="1"/>
<evidence type="ECO:0000305" key="2"/>
<keyword id="KW-0238">DNA-binding</keyword>
<keyword id="KW-0240">DNA-directed RNA polymerase</keyword>
<keyword id="KW-0539">Nucleus</keyword>
<keyword id="KW-1185">Reference proteome</keyword>
<keyword id="KW-0804">Transcription</keyword>
<sequence>MAGIIFDDMFKVKSVDPDGKKFDRVSRYFCDAESFKMELIIDINSQIYPLKQNDKVRLVLATTLREDGLADEGEYDPKAEYPRIKQYEYVMYGKVYRLEDDDTGTDGGKLAAYASFGGLLMRLKGEAINLHGFEVDMNLYLLMKKTDF</sequence>
<protein>
    <recommendedName>
        <fullName>Probable DNA-directed RNA polymerases I, II, and III subunit RPABC3</fullName>
        <shortName>RNA polymerases I, II, and III subunit ABC3</shortName>
    </recommendedName>
    <alternativeName>
        <fullName>RNA polymerase B subunit 8</fullName>
        <shortName>RPB8</shortName>
    </alternativeName>
    <alternativeName>
        <fullName>RPB17</fullName>
    </alternativeName>
</protein>
<dbReference type="EMBL" id="FO080682">
    <property type="protein sequence ID" value="CCD65759.1"/>
    <property type="molecule type" value="Genomic_DNA"/>
</dbReference>
<dbReference type="PIR" id="T16177">
    <property type="entry name" value="T16177"/>
</dbReference>
<dbReference type="RefSeq" id="NP_498036.1">
    <property type="nucleotide sequence ID" value="NM_065635.5"/>
</dbReference>
<dbReference type="SMR" id="Q19826"/>
<dbReference type="BioGRID" id="40894">
    <property type="interactions" value="32"/>
</dbReference>
<dbReference type="ComplexPortal" id="CPX-2812">
    <property type="entry name" value="DNA-directed RNA polymerase III complex"/>
</dbReference>
<dbReference type="ComplexPortal" id="CPX-8913">
    <property type="entry name" value="DNA-directed RNA polymerase I complex"/>
</dbReference>
<dbReference type="DIP" id="DIP-26518N"/>
<dbReference type="FunCoup" id="Q19826">
    <property type="interactions" value="2627"/>
</dbReference>
<dbReference type="IntAct" id="Q19826">
    <property type="interactions" value="2"/>
</dbReference>
<dbReference type="STRING" id="6239.F26F4.11.1"/>
<dbReference type="PaxDb" id="6239-F26F4.11"/>
<dbReference type="PeptideAtlas" id="Q19826"/>
<dbReference type="EnsemblMetazoa" id="F26F4.11.1">
    <property type="protein sequence ID" value="F26F4.11.1"/>
    <property type="gene ID" value="WBGene00017830"/>
</dbReference>
<dbReference type="GeneID" id="175660"/>
<dbReference type="KEGG" id="cel:CELE_F26F4.11"/>
<dbReference type="AGR" id="WB:WBGene00017830"/>
<dbReference type="CTD" id="175660"/>
<dbReference type="WormBase" id="F26F4.11">
    <property type="protein sequence ID" value="CE04448"/>
    <property type="gene ID" value="WBGene00017830"/>
    <property type="gene designation" value="rpb-8"/>
</dbReference>
<dbReference type="eggNOG" id="KOG3400">
    <property type="taxonomic scope" value="Eukaryota"/>
</dbReference>
<dbReference type="GeneTree" id="ENSGT00390000018195"/>
<dbReference type="HOGENOM" id="CLU_103864_1_1_1"/>
<dbReference type="InParanoid" id="Q19826"/>
<dbReference type="OMA" id="IKQYEYV"/>
<dbReference type="OrthoDB" id="10249565at2759"/>
<dbReference type="PhylomeDB" id="Q19826"/>
<dbReference type="Reactome" id="R-CEL-112382">
    <property type="pathway name" value="Formation of RNA Pol II elongation complex"/>
</dbReference>
<dbReference type="Reactome" id="R-CEL-113418">
    <property type="pathway name" value="Formation of the Early Elongation Complex"/>
</dbReference>
<dbReference type="Reactome" id="R-CEL-5250924">
    <property type="pathway name" value="B-WICH complex positively regulates rRNA expression"/>
</dbReference>
<dbReference type="Reactome" id="R-CEL-5578749">
    <property type="pathway name" value="Transcriptional regulation by small RNAs"/>
</dbReference>
<dbReference type="Reactome" id="R-CEL-674695">
    <property type="pathway name" value="RNA Polymerase II Pre-transcription Events"/>
</dbReference>
<dbReference type="Reactome" id="R-CEL-6781823">
    <property type="pathway name" value="Formation of TC-NER Pre-Incision Complex"/>
</dbReference>
<dbReference type="Reactome" id="R-CEL-6782135">
    <property type="pathway name" value="Dual incision in TC-NER"/>
</dbReference>
<dbReference type="Reactome" id="R-CEL-6782210">
    <property type="pathway name" value="Gap-filling DNA repair synthesis and ligation in TC-NER"/>
</dbReference>
<dbReference type="Reactome" id="R-CEL-6796648">
    <property type="pathway name" value="TP53 Regulates Transcription of DNA Repair Genes"/>
</dbReference>
<dbReference type="Reactome" id="R-CEL-6803529">
    <property type="pathway name" value="FGFR2 alternative splicing"/>
</dbReference>
<dbReference type="Reactome" id="R-CEL-6807505">
    <property type="pathway name" value="RNA polymerase II transcribes snRNA genes"/>
</dbReference>
<dbReference type="Reactome" id="R-CEL-72086">
    <property type="pathway name" value="mRNA Capping"/>
</dbReference>
<dbReference type="Reactome" id="R-CEL-72163">
    <property type="pathway name" value="mRNA Splicing - Major Pathway"/>
</dbReference>
<dbReference type="Reactome" id="R-CEL-72165">
    <property type="pathway name" value="mRNA Splicing - Minor Pathway"/>
</dbReference>
<dbReference type="Reactome" id="R-CEL-72203">
    <property type="pathway name" value="Processing of Capped Intron-Containing Pre-mRNA"/>
</dbReference>
<dbReference type="Reactome" id="R-CEL-73762">
    <property type="pathway name" value="RNA Polymerase I Transcription Initiation"/>
</dbReference>
<dbReference type="Reactome" id="R-CEL-73772">
    <property type="pathway name" value="RNA Polymerase I Promoter Escape"/>
</dbReference>
<dbReference type="Reactome" id="R-CEL-73776">
    <property type="pathway name" value="RNA Polymerase II Promoter Escape"/>
</dbReference>
<dbReference type="Reactome" id="R-CEL-73779">
    <property type="pathway name" value="RNA Polymerase II Transcription Pre-Initiation And Promoter Opening"/>
</dbReference>
<dbReference type="Reactome" id="R-CEL-75953">
    <property type="pathway name" value="RNA Polymerase II Transcription Initiation"/>
</dbReference>
<dbReference type="Reactome" id="R-CEL-75955">
    <property type="pathway name" value="RNA Polymerase II Transcription Elongation"/>
</dbReference>
<dbReference type="Reactome" id="R-CEL-76042">
    <property type="pathway name" value="RNA Polymerase II Transcription Initiation And Promoter Clearance"/>
</dbReference>
<dbReference type="Reactome" id="R-CEL-77075">
    <property type="pathway name" value="RNA Pol II CTD phosphorylation and interaction with CE"/>
</dbReference>
<dbReference type="Reactome" id="R-CEL-9018519">
    <property type="pathway name" value="Estrogen-dependent gene expression"/>
</dbReference>
<dbReference type="PRO" id="PR:Q19826"/>
<dbReference type="Proteomes" id="UP000001940">
    <property type="component" value="Chromosome III"/>
</dbReference>
<dbReference type="Bgee" id="WBGene00017830">
    <property type="expression patterns" value="Expressed in germ line (C elegans) and 4 other cell types or tissues"/>
</dbReference>
<dbReference type="GO" id="GO:0005736">
    <property type="term" value="C:RNA polymerase I complex"/>
    <property type="evidence" value="ECO:0000318"/>
    <property type="project" value="GO_Central"/>
</dbReference>
<dbReference type="GO" id="GO:0005665">
    <property type="term" value="C:RNA polymerase II, core complex"/>
    <property type="evidence" value="ECO:0000318"/>
    <property type="project" value="GO_Central"/>
</dbReference>
<dbReference type="GO" id="GO:0005666">
    <property type="term" value="C:RNA polymerase III complex"/>
    <property type="evidence" value="ECO:0000318"/>
    <property type="project" value="GO_Central"/>
</dbReference>
<dbReference type="GO" id="GO:0003677">
    <property type="term" value="F:DNA binding"/>
    <property type="evidence" value="ECO:0007669"/>
    <property type="project" value="UniProtKB-KW"/>
</dbReference>
<dbReference type="GO" id="GO:0003899">
    <property type="term" value="F:DNA-directed RNA polymerase activity"/>
    <property type="evidence" value="ECO:0007669"/>
    <property type="project" value="InterPro"/>
</dbReference>
<dbReference type="GO" id="GO:0006351">
    <property type="term" value="P:DNA-templated transcription"/>
    <property type="evidence" value="ECO:0007669"/>
    <property type="project" value="InterPro"/>
</dbReference>
<dbReference type="FunFam" id="2.40.50.140:FF:000073">
    <property type="entry name" value="DNA-directed RNA polymerases I, II, and III subunit RPABC3"/>
    <property type="match status" value="1"/>
</dbReference>
<dbReference type="Gene3D" id="2.40.50.140">
    <property type="entry name" value="Nucleic acid-binding proteins"/>
    <property type="match status" value="1"/>
</dbReference>
<dbReference type="InterPro" id="IPR012340">
    <property type="entry name" value="NA-bd_OB-fold"/>
</dbReference>
<dbReference type="InterPro" id="IPR005570">
    <property type="entry name" value="RPABC3"/>
</dbReference>
<dbReference type="PANTHER" id="PTHR10917">
    <property type="entry name" value="DNA-DIRECTED RNA POLYMERASES I, II, AND III SUBUNIT RPABC3"/>
    <property type="match status" value="1"/>
</dbReference>
<dbReference type="PANTHER" id="PTHR10917:SF0">
    <property type="entry name" value="DNA-DIRECTED RNA POLYMERASES I, II, AND III SUBUNIT RPABC3"/>
    <property type="match status" value="1"/>
</dbReference>
<dbReference type="Pfam" id="PF03870">
    <property type="entry name" value="RNA_pol_Rpb8"/>
    <property type="match status" value="1"/>
</dbReference>
<dbReference type="PIRSF" id="PIRSF000779">
    <property type="entry name" value="RNA_pol_Rpb8"/>
    <property type="match status" value="1"/>
</dbReference>
<dbReference type="SMART" id="SM00658">
    <property type="entry name" value="RPOL8c"/>
    <property type="match status" value="1"/>
</dbReference>
<dbReference type="SUPFAM" id="SSF50249">
    <property type="entry name" value="Nucleic acid-binding proteins"/>
    <property type="match status" value="1"/>
</dbReference>
<organism>
    <name type="scientific">Caenorhabditis elegans</name>
    <dbReference type="NCBI Taxonomy" id="6239"/>
    <lineage>
        <taxon>Eukaryota</taxon>
        <taxon>Metazoa</taxon>
        <taxon>Ecdysozoa</taxon>
        <taxon>Nematoda</taxon>
        <taxon>Chromadorea</taxon>
        <taxon>Rhabditida</taxon>
        <taxon>Rhabditina</taxon>
        <taxon>Rhabditomorpha</taxon>
        <taxon>Rhabditoidea</taxon>
        <taxon>Rhabditidae</taxon>
        <taxon>Peloderinae</taxon>
        <taxon>Caenorhabditis</taxon>
    </lineage>
</organism>
<feature type="chain" id="PRO_0000073999" description="Probable DNA-directed RNA polymerases I, II, and III subunit RPABC3">
    <location>
        <begin position="1"/>
        <end position="148"/>
    </location>
</feature>
<feature type="region of interest" description="Non-specific ssDNA binding" evidence="1">
    <location>
        <begin position="16"/>
        <end position="40"/>
    </location>
</feature>
<gene>
    <name type="primary">rpb-8</name>
    <name type="ORF">F26F4.11</name>
</gene>
<name>RPAB3_CAEEL</name>
<reference key="1">
    <citation type="journal article" date="1998" name="Science">
        <title>Genome sequence of the nematode C. elegans: a platform for investigating biology.</title>
        <authorList>
            <consortium name="The C. elegans sequencing consortium"/>
        </authorList>
    </citation>
    <scope>NUCLEOTIDE SEQUENCE [LARGE SCALE GENOMIC DNA]</scope>
    <source>
        <strain>Bristol N2</strain>
    </source>
</reference>
<accession>Q19826</accession>